<protein>
    <recommendedName>
        <fullName evidence="3">Leptoglycin</fullName>
    </recommendedName>
</protein>
<reference key="1">
    <citation type="journal article" date="2009" name="Toxicon">
        <title>Leptoglycin: a new glycine/leucine-rich antimicrobial peptide isolated from the skin secretion of the South American frog Leptodactylus pentadactylus (Leptodactylidae).</title>
        <authorList>
            <person name="Sousa J.C."/>
            <person name="Berto R.F."/>
            <person name="Gois E.A."/>
            <person name="Fontenele-Cardi N.C."/>
            <person name="Honorio-Junior J.E.R."/>
            <person name="Konno K."/>
            <person name="Richardson M."/>
            <person name="Rocha M.F.G."/>
            <person name="Camargo A.A.C.M."/>
            <person name="Pimenta D.C."/>
            <person name="Cardi B.A."/>
            <person name="Carvalho K.M."/>
        </authorList>
    </citation>
    <scope>PROTEIN SEQUENCE</scope>
    <scope>FUNCTION</scope>
    <scope>SUBCELLULAR LOCATION</scope>
    <scope>TISSUE SPECIFICITY</scope>
    <scope>MASS SPECTROMETRY</scope>
    <source>
        <tissue>Skin secretion</tissue>
    </source>
</reference>
<name>LEPT_LEPPE</name>
<sequence length="22" mass="1762">GLLGGLLGPLLGGGGGGGGGLL</sequence>
<keyword id="KW-0878">Amphibian defense peptide</keyword>
<keyword id="KW-0044">Antibiotic</keyword>
<keyword id="KW-0929">Antimicrobial</keyword>
<keyword id="KW-0903">Direct protein sequencing</keyword>
<keyword id="KW-0964">Secreted</keyword>
<organism>
    <name type="scientific">Leptodactylus pentadactylus</name>
    <name type="common">Smokey jungle frog</name>
    <name type="synonym">Rana pentadactyla</name>
    <dbReference type="NCBI Taxonomy" id="47564"/>
    <lineage>
        <taxon>Eukaryota</taxon>
        <taxon>Metazoa</taxon>
        <taxon>Chordata</taxon>
        <taxon>Craniata</taxon>
        <taxon>Vertebrata</taxon>
        <taxon>Euteleostomi</taxon>
        <taxon>Amphibia</taxon>
        <taxon>Batrachia</taxon>
        <taxon>Anura</taxon>
        <taxon>Neobatrachia</taxon>
        <taxon>Hyloidea</taxon>
        <taxon>Leptodactylidae</taxon>
        <taxon>Leptodactylinae</taxon>
        <taxon>Leptodactylus</taxon>
    </lineage>
</organism>
<comment type="function">
    <text evidence="2">Antimicrobial protein. Has antibacterial activity against the Gram-negative bacteria E.coli ATCC 28922 (MIC=50 uM), P.aeruginosa ATCC 9027 (MIC=8 uM) and C.freundii ATCC 8090 (MIC=75 uM). Does not have hemolytic activity.</text>
</comment>
<comment type="subcellular location">
    <subcellularLocation>
        <location evidence="2">Secreted</location>
    </subcellularLocation>
</comment>
<comment type="tissue specificity">
    <text evidence="2">Expressed by the skin glands.</text>
</comment>
<comment type="mass spectrometry" mass="1762.068" error="0.05" method="Electrospray" evidence="2"/>
<comment type="mass spectrometry" mass="1761.6" error="1.0" method="MALDI" evidence="2"/>
<feature type="peptide" id="PRO_0000371254" description="Leptoglycin" evidence="2">
    <location>
        <begin position="1"/>
        <end position="22"/>
    </location>
</feature>
<feature type="region of interest" description="Disordered" evidence="1">
    <location>
        <begin position="1"/>
        <end position="22"/>
    </location>
</feature>
<proteinExistence type="evidence at protein level"/>
<accession>P86267</accession>
<dbReference type="GO" id="GO:0005576">
    <property type="term" value="C:extracellular region"/>
    <property type="evidence" value="ECO:0007669"/>
    <property type="project" value="UniProtKB-SubCell"/>
</dbReference>
<dbReference type="GO" id="GO:0042742">
    <property type="term" value="P:defense response to bacterium"/>
    <property type="evidence" value="ECO:0007669"/>
    <property type="project" value="UniProtKB-KW"/>
</dbReference>
<evidence type="ECO:0000256" key="1">
    <source>
        <dbReference type="SAM" id="MobiDB-lite"/>
    </source>
</evidence>
<evidence type="ECO:0000269" key="2">
    <source>
    </source>
</evidence>
<evidence type="ECO:0000303" key="3">
    <source>
    </source>
</evidence>